<evidence type="ECO:0000255" key="1">
    <source>
        <dbReference type="HAMAP-Rule" id="MF_00181"/>
    </source>
</evidence>
<protein>
    <recommendedName>
        <fullName evidence="1">Probable cytosol aminopeptidase</fullName>
        <ecNumber evidence="1">3.4.11.1</ecNumber>
    </recommendedName>
    <alternativeName>
        <fullName evidence="1">Leucine aminopeptidase</fullName>
        <shortName evidence="1">LAP</shortName>
        <ecNumber evidence="1">3.4.11.10</ecNumber>
    </alternativeName>
    <alternativeName>
        <fullName evidence="1">Leucyl aminopeptidase</fullName>
    </alternativeName>
</protein>
<accession>Q1CM01</accession>
<accession>C4GPL4</accession>
<comment type="function">
    <text evidence="1">Presumably involved in the processing and regular turnover of intracellular proteins. Catalyzes the removal of unsubstituted N-terminal amino acids from various peptides.</text>
</comment>
<comment type="catalytic activity">
    <reaction evidence="1">
        <text>Release of an N-terminal amino acid, Xaa-|-Yaa-, in which Xaa is preferably Leu, but may be other amino acids including Pro although not Arg or Lys, and Yaa may be Pro. Amino acid amides and methyl esters are also readily hydrolyzed, but rates on arylamides are exceedingly low.</text>
        <dbReference type="EC" id="3.4.11.1"/>
    </reaction>
</comment>
<comment type="catalytic activity">
    <reaction evidence="1">
        <text>Release of an N-terminal amino acid, preferentially leucine, but not glutamic or aspartic acids.</text>
        <dbReference type="EC" id="3.4.11.10"/>
    </reaction>
</comment>
<comment type="cofactor">
    <cofactor evidence="1">
        <name>Mn(2+)</name>
        <dbReference type="ChEBI" id="CHEBI:29035"/>
    </cofactor>
    <text evidence="1">Binds 2 manganese ions per subunit.</text>
</comment>
<comment type="subcellular location">
    <subcellularLocation>
        <location evidence="1">Cytoplasm</location>
    </subcellularLocation>
</comment>
<comment type="similarity">
    <text evidence="1">Belongs to the peptidase M17 family.</text>
</comment>
<sequence length="503" mass="54797">MEFSVKSGSPEKQRSACIVVGVFEPRRLSPIAEQLDKISDGYISALLRRGELEGKVGQTLLLHHVPNILSERILLIGCGKERELDERQYKQVIQKTINTLNDTGSMEAVCFLTELHVKGRNTYWKVRQAVETAKETLYTFDQLKSNKTEPRRPLRKMVFNVPTRRELTSGERAIQHGLAIASGIKAAKDLGNMPPNICNAAYLASQARQLADAFSTNTVTRVIGEQQMKELGMHAYLAVGHGSQNESLMSVIEYKGNPNKDAKPIVLVGKGLTFDSGGISIKPAEGMDEMKYDMCGAATVYGVMRVVAELQLPLNVVGVLAGCENMPGGRAYRPGDILTTMSGQTVEVLNTDAEGRLVLCDALTYVERFEPELVIDIATLTGACVVALGNHLTGLMSNHNPLAHELIGASEQAGDRAWRLPLGEEYYEQLDSNFADMANIGGRAGGAITAGCFLSRFTRKYSWAHLDIAGTAWRSGKNKGATGRPVALLSQFLLNRAGLNGDD</sequence>
<dbReference type="EC" id="3.4.11.1" evidence="1"/>
<dbReference type="EC" id="3.4.11.10" evidence="1"/>
<dbReference type="EMBL" id="CP000305">
    <property type="protein sequence ID" value="ABG16979.1"/>
    <property type="molecule type" value="Genomic_DNA"/>
</dbReference>
<dbReference type="EMBL" id="ACNQ01000006">
    <property type="protein sequence ID" value="EEO78446.1"/>
    <property type="molecule type" value="Genomic_DNA"/>
</dbReference>
<dbReference type="RefSeq" id="WP_002209310.1">
    <property type="nucleotide sequence ID" value="NZ_ACNQ01000006.1"/>
</dbReference>
<dbReference type="SMR" id="Q1CM01"/>
<dbReference type="MEROPS" id="M17.003"/>
<dbReference type="GeneID" id="57975268"/>
<dbReference type="KEGG" id="ypn:YPN_0647"/>
<dbReference type="HOGENOM" id="CLU_013734_2_2_6"/>
<dbReference type="Proteomes" id="UP000008936">
    <property type="component" value="Chromosome"/>
</dbReference>
<dbReference type="GO" id="GO:0005737">
    <property type="term" value="C:cytoplasm"/>
    <property type="evidence" value="ECO:0007669"/>
    <property type="project" value="UniProtKB-SubCell"/>
</dbReference>
<dbReference type="GO" id="GO:0030145">
    <property type="term" value="F:manganese ion binding"/>
    <property type="evidence" value="ECO:0007669"/>
    <property type="project" value="UniProtKB-UniRule"/>
</dbReference>
<dbReference type="GO" id="GO:0070006">
    <property type="term" value="F:metalloaminopeptidase activity"/>
    <property type="evidence" value="ECO:0007669"/>
    <property type="project" value="InterPro"/>
</dbReference>
<dbReference type="GO" id="GO:0006508">
    <property type="term" value="P:proteolysis"/>
    <property type="evidence" value="ECO:0007669"/>
    <property type="project" value="UniProtKB-KW"/>
</dbReference>
<dbReference type="CDD" id="cd00433">
    <property type="entry name" value="Peptidase_M17"/>
    <property type="match status" value="1"/>
</dbReference>
<dbReference type="FunFam" id="3.40.220.10:FF:000001">
    <property type="entry name" value="Probable cytosol aminopeptidase"/>
    <property type="match status" value="1"/>
</dbReference>
<dbReference type="FunFam" id="3.40.630.10:FF:000004">
    <property type="entry name" value="Probable cytosol aminopeptidase"/>
    <property type="match status" value="1"/>
</dbReference>
<dbReference type="Gene3D" id="3.40.220.10">
    <property type="entry name" value="Leucine Aminopeptidase, subunit E, domain 1"/>
    <property type="match status" value="1"/>
</dbReference>
<dbReference type="Gene3D" id="3.40.630.10">
    <property type="entry name" value="Zn peptidases"/>
    <property type="match status" value="1"/>
</dbReference>
<dbReference type="HAMAP" id="MF_00181">
    <property type="entry name" value="Cytosol_peptidase_M17"/>
    <property type="match status" value="1"/>
</dbReference>
<dbReference type="InterPro" id="IPR011356">
    <property type="entry name" value="Leucine_aapep/pepB"/>
</dbReference>
<dbReference type="InterPro" id="IPR043472">
    <property type="entry name" value="Macro_dom-like"/>
</dbReference>
<dbReference type="InterPro" id="IPR000819">
    <property type="entry name" value="Peptidase_M17_C"/>
</dbReference>
<dbReference type="InterPro" id="IPR023042">
    <property type="entry name" value="Peptidase_M17_leu_NH2_pept"/>
</dbReference>
<dbReference type="InterPro" id="IPR008283">
    <property type="entry name" value="Peptidase_M17_N"/>
</dbReference>
<dbReference type="NCBIfam" id="NF002072">
    <property type="entry name" value="PRK00913.1-1"/>
    <property type="match status" value="1"/>
</dbReference>
<dbReference type="NCBIfam" id="NF002074">
    <property type="entry name" value="PRK00913.1-4"/>
    <property type="match status" value="1"/>
</dbReference>
<dbReference type="PANTHER" id="PTHR11963:SF23">
    <property type="entry name" value="CYTOSOL AMINOPEPTIDASE"/>
    <property type="match status" value="1"/>
</dbReference>
<dbReference type="PANTHER" id="PTHR11963">
    <property type="entry name" value="LEUCINE AMINOPEPTIDASE-RELATED"/>
    <property type="match status" value="1"/>
</dbReference>
<dbReference type="Pfam" id="PF00883">
    <property type="entry name" value="Peptidase_M17"/>
    <property type="match status" value="1"/>
</dbReference>
<dbReference type="Pfam" id="PF02789">
    <property type="entry name" value="Peptidase_M17_N"/>
    <property type="match status" value="1"/>
</dbReference>
<dbReference type="PRINTS" id="PR00481">
    <property type="entry name" value="LAMNOPPTDASE"/>
</dbReference>
<dbReference type="SUPFAM" id="SSF52949">
    <property type="entry name" value="Macro domain-like"/>
    <property type="match status" value="1"/>
</dbReference>
<dbReference type="SUPFAM" id="SSF53187">
    <property type="entry name" value="Zn-dependent exopeptidases"/>
    <property type="match status" value="1"/>
</dbReference>
<dbReference type="PROSITE" id="PS00631">
    <property type="entry name" value="CYTOSOL_AP"/>
    <property type="match status" value="1"/>
</dbReference>
<gene>
    <name evidence="1" type="primary">pepA</name>
    <name type="ordered locus">YPN_0647</name>
    <name type="ORF">YP516_0683</name>
</gene>
<name>AMPA_YERPN</name>
<reference key="1">
    <citation type="journal article" date="2006" name="J. Bacteriol.">
        <title>Complete genome sequence of Yersinia pestis strains Antiqua and Nepal516: evidence of gene reduction in an emerging pathogen.</title>
        <authorList>
            <person name="Chain P.S.G."/>
            <person name="Hu P."/>
            <person name="Malfatti S.A."/>
            <person name="Radnedge L."/>
            <person name="Larimer F."/>
            <person name="Vergez L.M."/>
            <person name="Worsham P."/>
            <person name="Chu M.C."/>
            <person name="Andersen G.L."/>
        </authorList>
    </citation>
    <scope>NUCLEOTIDE SEQUENCE [LARGE SCALE GENOMIC DNA]</scope>
    <source>
        <strain>Nepal516</strain>
    </source>
</reference>
<reference key="2">
    <citation type="submission" date="2009-04" db="EMBL/GenBank/DDBJ databases">
        <title>Yersinia pestis Nepal516A whole genome shotgun sequencing project.</title>
        <authorList>
            <person name="Plunkett G. III"/>
            <person name="Anderson B.D."/>
            <person name="Baumler D.J."/>
            <person name="Burland V."/>
            <person name="Cabot E.L."/>
            <person name="Glasner J.D."/>
            <person name="Mau B."/>
            <person name="Neeno-Eckwall E."/>
            <person name="Perna N.T."/>
            <person name="Munk A.C."/>
            <person name="Tapia R."/>
            <person name="Green L.D."/>
            <person name="Rogers Y.C."/>
            <person name="Detter J.C."/>
            <person name="Bruce D.C."/>
            <person name="Brettin T.S."/>
        </authorList>
    </citation>
    <scope>NUCLEOTIDE SEQUENCE [LARGE SCALE GENOMIC DNA]</scope>
    <source>
        <strain>Nepal516</strain>
    </source>
</reference>
<organism>
    <name type="scientific">Yersinia pestis bv. Antiqua (strain Nepal516)</name>
    <dbReference type="NCBI Taxonomy" id="377628"/>
    <lineage>
        <taxon>Bacteria</taxon>
        <taxon>Pseudomonadati</taxon>
        <taxon>Pseudomonadota</taxon>
        <taxon>Gammaproteobacteria</taxon>
        <taxon>Enterobacterales</taxon>
        <taxon>Yersiniaceae</taxon>
        <taxon>Yersinia</taxon>
    </lineage>
</organism>
<keyword id="KW-0031">Aminopeptidase</keyword>
<keyword id="KW-0963">Cytoplasm</keyword>
<keyword id="KW-0378">Hydrolase</keyword>
<keyword id="KW-0464">Manganese</keyword>
<keyword id="KW-0479">Metal-binding</keyword>
<keyword id="KW-0645">Protease</keyword>
<feature type="chain" id="PRO_1000020005" description="Probable cytosol aminopeptidase">
    <location>
        <begin position="1"/>
        <end position="503"/>
    </location>
</feature>
<feature type="active site" evidence="1">
    <location>
        <position position="282"/>
    </location>
</feature>
<feature type="active site" evidence="1">
    <location>
        <position position="356"/>
    </location>
</feature>
<feature type="binding site" evidence="1">
    <location>
        <position position="270"/>
    </location>
    <ligand>
        <name>Mn(2+)</name>
        <dbReference type="ChEBI" id="CHEBI:29035"/>
        <label>2</label>
    </ligand>
</feature>
<feature type="binding site" evidence="1">
    <location>
        <position position="275"/>
    </location>
    <ligand>
        <name>Mn(2+)</name>
        <dbReference type="ChEBI" id="CHEBI:29035"/>
        <label>1</label>
    </ligand>
</feature>
<feature type="binding site" evidence="1">
    <location>
        <position position="275"/>
    </location>
    <ligand>
        <name>Mn(2+)</name>
        <dbReference type="ChEBI" id="CHEBI:29035"/>
        <label>2</label>
    </ligand>
</feature>
<feature type="binding site" evidence="1">
    <location>
        <position position="293"/>
    </location>
    <ligand>
        <name>Mn(2+)</name>
        <dbReference type="ChEBI" id="CHEBI:29035"/>
        <label>2</label>
    </ligand>
</feature>
<feature type="binding site" evidence="1">
    <location>
        <position position="352"/>
    </location>
    <ligand>
        <name>Mn(2+)</name>
        <dbReference type="ChEBI" id="CHEBI:29035"/>
        <label>1</label>
    </ligand>
</feature>
<feature type="binding site" evidence="1">
    <location>
        <position position="354"/>
    </location>
    <ligand>
        <name>Mn(2+)</name>
        <dbReference type="ChEBI" id="CHEBI:29035"/>
        <label>1</label>
    </ligand>
</feature>
<feature type="binding site" evidence="1">
    <location>
        <position position="354"/>
    </location>
    <ligand>
        <name>Mn(2+)</name>
        <dbReference type="ChEBI" id="CHEBI:29035"/>
        <label>2</label>
    </ligand>
</feature>
<proteinExistence type="inferred from homology"/>